<evidence type="ECO:0000250" key="1">
    <source>
        <dbReference type="UniProtKB" id="P0A955"/>
    </source>
</evidence>
<evidence type="ECO:0000269" key="2">
    <source>
    </source>
</evidence>
<evidence type="ECO:0000303" key="3">
    <source>
    </source>
</evidence>
<evidence type="ECO:0000305" key="4"/>
<evidence type="ECO:0007829" key="5">
    <source>
        <dbReference type="PDB" id="5XSE"/>
    </source>
</evidence>
<gene>
    <name evidence="3" type="primary">eda</name>
    <name type="synonym">kdgA</name>
    <name type="ordered locus">ZMO0997</name>
</gene>
<accession>Q00384</accession>
<accession>Q5NNT9</accession>
<protein>
    <recommendedName>
        <fullName evidence="1">2-dehydro-3-deoxy-phosphogluconate aldolase</fullName>
        <ecNumber evidence="2">4.1.2.14</ecNumber>
    </recommendedName>
    <alternativeName>
        <fullName evidence="3">2-keto-3-deoxy-6-phosphogluconate aldolase</fullName>
        <shortName evidence="1">KDPG aldolase</shortName>
    </alternativeName>
</protein>
<comment type="function">
    <text evidence="2">Involved in the degradation of glucose via the Entner-Doudoroff pathway (PubMed:1809834). Catalyzes the reversible, stereospecific retro-aldol cleavage of 2-keto-3-deoxy-6-phosphogluconate (KDPG) to pyruvate and D-glyceraldehyde-3-phosphate (PubMed:1809834).</text>
</comment>
<comment type="catalytic activity">
    <reaction evidence="2">
        <text>2-dehydro-3-deoxy-6-phospho-D-gluconate = D-glyceraldehyde 3-phosphate + pyruvate</text>
        <dbReference type="Rhea" id="RHEA:17089"/>
        <dbReference type="ChEBI" id="CHEBI:15361"/>
        <dbReference type="ChEBI" id="CHEBI:57569"/>
        <dbReference type="ChEBI" id="CHEBI:59776"/>
        <dbReference type="EC" id="4.1.2.14"/>
    </reaction>
</comment>
<comment type="pathway">
    <text>Carbohydrate acid metabolism; 2-dehydro-3-deoxy-D-gluconate degradation; D-glyceraldehyde 3-phosphate and pyruvate from 2-dehydro-3-deoxy-D-gluconate: step 2/2.</text>
</comment>
<comment type="subunit">
    <text evidence="1">Homotrimer.</text>
</comment>
<comment type="subcellular location">
    <subcellularLocation>
        <location evidence="1">Cytoplasm</location>
    </subcellularLocation>
</comment>
<comment type="induction">
    <text evidence="2">The eda gene is monocistronic and is transcribed from a single promoter (PubMed:1809834). High-level expression of the gene can be attributed to very efficient translational initiation caused by the high quality of the ribosome-binding site and stability of the mRNA (PubMed:1809834).</text>
</comment>
<comment type="similarity">
    <text evidence="4">Belongs to the KHG/KDPG aldolase family.</text>
</comment>
<organism>
    <name type="scientific">Zymomonas mobilis subsp. mobilis (strain ATCC 31821 / ZM4 / CP4)</name>
    <dbReference type="NCBI Taxonomy" id="264203"/>
    <lineage>
        <taxon>Bacteria</taxon>
        <taxon>Pseudomonadati</taxon>
        <taxon>Pseudomonadota</taxon>
        <taxon>Alphaproteobacteria</taxon>
        <taxon>Sphingomonadales</taxon>
        <taxon>Zymomonadaceae</taxon>
        <taxon>Zymomonas</taxon>
    </lineage>
</organism>
<keyword id="KW-0002">3D-structure</keyword>
<keyword id="KW-0119">Carbohydrate metabolism</keyword>
<keyword id="KW-0963">Cytoplasm</keyword>
<keyword id="KW-0456">Lyase</keyword>
<keyword id="KW-1185">Reference proteome</keyword>
<keyword id="KW-0704">Schiff base</keyword>
<feature type="chain" id="PRO_0000201044" description="2-dehydro-3-deoxy-phosphogluconate aldolase">
    <location>
        <begin position="1"/>
        <end position="208"/>
    </location>
</feature>
<feature type="active site" description="Proton acceptor" evidence="1">
    <location>
        <position position="41"/>
    </location>
</feature>
<feature type="active site" description="Schiff-base intermediate with substrate" evidence="1">
    <location>
        <position position="128"/>
    </location>
</feature>
<feature type="binding site" evidence="1">
    <location>
        <position position="45"/>
    </location>
    <ligand>
        <name>pyruvate</name>
        <dbReference type="ChEBI" id="CHEBI:15361"/>
    </ligand>
</feature>
<feature type="binding site" evidence="1">
    <location>
        <position position="68"/>
    </location>
    <ligand>
        <name>pyruvate</name>
        <dbReference type="ChEBI" id="CHEBI:15361"/>
    </ligand>
</feature>
<feature type="binding site" description="covalent" evidence="1">
    <location>
        <position position="128"/>
    </location>
    <ligand>
        <name>pyruvate</name>
        <dbReference type="ChEBI" id="CHEBI:15361"/>
    </ligand>
</feature>
<feature type="site" description="Plays a major role in determining the stereoselectivity" evidence="1">
    <location>
        <position position="156"/>
    </location>
</feature>
<feature type="sequence conflict" description="In Ref. 1; CAA41258." evidence="4" ref="1">
    <original>MRDI</original>
    <variation>M</variation>
    <location>
        <begin position="1"/>
        <end position="4"/>
    </location>
</feature>
<feature type="helix" evidence="5">
    <location>
        <begin position="4"/>
        <end position="9"/>
    </location>
</feature>
<feature type="strand" evidence="5">
    <location>
        <begin position="12"/>
        <end position="17"/>
    </location>
</feature>
<feature type="helix" evidence="5">
    <location>
        <begin position="22"/>
        <end position="24"/>
    </location>
</feature>
<feature type="helix" evidence="5">
    <location>
        <begin position="25"/>
        <end position="34"/>
    </location>
</feature>
<feature type="strand" evidence="5">
    <location>
        <begin position="39"/>
        <end position="43"/>
    </location>
</feature>
<feature type="helix" evidence="5">
    <location>
        <begin position="49"/>
        <end position="56"/>
    </location>
</feature>
<feature type="strand" evidence="5">
    <location>
        <begin position="63"/>
        <end position="68"/>
    </location>
</feature>
<feature type="helix" evidence="5">
    <location>
        <begin position="72"/>
        <end position="80"/>
    </location>
</feature>
<feature type="strand" evidence="5">
    <location>
        <begin position="84"/>
        <end position="90"/>
    </location>
</feature>
<feature type="helix" evidence="5">
    <location>
        <begin position="93"/>
        <end position="101"/>
    </location>
</feature>
<feature type="strand" evidence="5">
    <location>
        <begin position="106"/>
        <end position="110"/>
    </location>
</feature>
<feature type="helix" evidence="5">
    <location>
        <begin position="113"/>
        <end position="121"/>
    </location>
</feature>
<feature type="strand" evidence="5">
    <location>
        <begin position="126"/>
        <end position="129"/>
    </location>
</feature>
<feature type="helix" evidence="5">
    <location>
        <begin position="132"/>
        <end position="134"/>
    </location>
</feature>
<feature type="helix" evidence="5">
    <location>
        <begin position="137"/>
        <end position="147"/>
    </location>
</feature>
<feature type="strand" evidence="5">
    <location>
        <begin position="152"/>
        <end position="155"/>
    </location>
</feature>
<feature type="turn" evidence="5">
    <location>
        <begin position="161"/>
        <end position="163"/>
    </location>
</feature>
<feature type="helix" evidence="5">
    <location>
        <begin position="164"/>
        <end position="168"/>
    </location>
</feature>
<feature type="strand" evidence="5">
    <location>
        <begin position="176"/>
        <end position="179"/>
    </location>
</feature>
<feature type="helix" evidence="5">
    <location>
        <begin position="189"/>
        <end position="200"/>
    </location>
</feature>
<feature type="turn" evidence="5">
    <location>
        <begin position="205"/>
        <end position="207"/>
    </location>
</feature>
<dbReference type="EC" id="4.1.2.14" evidence="2"/>
<dbReference type="EMBL" id="X58364">
    <property type="protein sequence ID" value="CAA41258.1"/>
    <property type="molecule type" value="Genomic_DNA"/>
</dbReference>
<dbReference type="EMBL" id="AE008692">
    <property type="protein sequence ID" value="AAV89621.1"/>
    <property type="molecule type" value="Genomic_DNA"/>
</dbReference>
<dbReference type="RefSeq" id="WP_011240846.1">
    <property type="nucleotide sequence ID" value="NZ_CP035711.1"/>
</dbReference>
<dbReference type="PDB" id="5XSE">
    <property type="method" value="X-ray"/>
    <property type="resolution" value="1.80 A"/>
    <property type="chains" value="A/B/C=1-208"/>
</dbReference>
<dbReference type="PDB" id="5XSF">
    <property type="method" value="X-ray"/>
    <property type="resolution" value="1.96 A"/>
    <property type="chains" value="A=1-208"/>
</dbReference>
<dbReference type="PDBsum" id="5XSE"/>
<dbReference type="PDBsum" id="5XSF"/>
<dbReference type="SMR" id="Q00384"/>
<dbReference type="STRING" id="264203.ZMO0997"/>
<dbReference type="GeneID" id="79903862"/>
<dbReference type="KEGG" id="zmo:ZMO0997"/>
<dbReference type="eggNOG" id="COG0800">
    <property type="taxonomic scope" value="Bacteria"/>
</dbReference>
<dbReference type="HOGENOM" id="CLU_077795_1_1_5"/>
<dbReference type="BRENDA" id="4.1.2.14">
    <property type="organism ID" value="14380"/>
</dbReference>
<dbReference type="UniPathway" id="UPA00856">
    <property type="reaction ID" value="UER00829"/>
</dbReference>
<dbReference type="Proteomes" id="UP000001173">
    <property type="component" value="Chromosome"/>
</dbReference>
<dbReference type="GO" id="GO:0005737">
    <property type="term" value="C:cytoplasm"/>
    <property type="evidence" value="ECO:0007669"/>
    <property type="project" value="UniProtKB-SubCell"/>
</dbReference>
<dbReference type="GO" id="GO:0008700">
    <property type="term" value="F:(R,S)-4-hydroxy-2-oxoglutarate aldolase activity"/>
    <property type="evidence" value="ECO:0007669"/>
    <property type="project" value="UniProtKB-EC"/>
</dbReference>
<dbReference type="GO" id="GO:0008675">
    <property type="term" value="F:2-dehydro-3-deoxy-phosphogluconate aldolase activity"/>
    <property type="evidence" value="ECO:0007669"/>
    <property type="project" value="UniProtKB-EC"/>
</dbReference>
<dbReference type="CDD" id="cd00452">
    <property type="entry name" value="KDPG_aldolase"/>
    <property type="match status" value="1"/>
</dbReference>
<dbReference type="Gene3D" id="3.20.20.70">
    <property type="entry name" value="Aldolase class I"/>
    <property type="match status" value="1"/>
</dbReference>
<dbReference type="InterPro" id="IPR000887">
    <property type="entry name" value="Aldlse_KDPG_KHG"/>
</dbReference>
<dbReference type="InterPro" id="IPR013785">
    <property type="entry name" value="Aldolase_TIM"/>
</dbReference>
<dbReference type="InterPro" id="IPR031337">
    <property type="entry name" value="KDPG/KHG_AS_1"/>
</dbReference>
<dbReference type="InterPro" id="IPR031338">
    <property type="entry name" value="KDPG/KHG_AS_2"/>
</dbReference>
<dbReference type="NCBIfam" id="TIGR01182">
    <property type="entry name" value="eda"/>
    <property type="match status" value="1"/>
</dbReference>
<dbReference type="NCBIfam" id="NF004325">
    <property type="entry name" value="PRK05718.1"/>
    <property type="match status" value="1"/>
</dbReference>
<dbReference type="PANTHER" id="PTHR30246:SF1">
    <property type="entry name" value="2-DEHYDRO-3-DEOXY-6-PHOSPHOGALACTONATE ALDOLASE-RELATED"/>
    <property type="match status" value="1"/>
</dbReference>
<dbReference type="PANTHER" id="PTHR30246">
    <property type="entry name" value="2-KETO-3-DEOXY-6-PHOSPHOGLUCONATE ALDOLASE"/>
    <property type="match status" value="1"/>
</dbReference>
<dbReference type="Pfam" id="PF01081">
    <property type="entry name" value="Aldolase"/>
    <property type="match status" value="1"/>
</dbReference>
<dbReference type="SUPFAM" id="SSF51569">
    <property type="entry name" value="Aldolase"/>
    <property type="match status" value="1"/>
</dbReference>
<dbReference type="PROSITE" id="PS00159">
    <property type="entry name" value="ALDOLASE_KDPG_KHG_1"/>
    <property type="match status" value="1"/>
</dbReference>
<dbReference type="PROSITE" id="PS00160">
    <property type="entry name" value="ALDOLASE_KDPG_KHG_2"/>
    <property type="match status" value="1"/>
</dbReference>
<name>ALKD_ZYMMO</name>
<reference key="1">
    <citation type="journal article" date="1991" name="Mol. Microbiol.">
        <title>Cloning, characterization and expression of the Zymononas mobilis eda gene that encodes 2-keto-3-deoxy-6-phosphogluconate aldolase of the Entner-Doudoroff pathway.</title>
        <authorList>
            <person name="Conway T."/>
            <person name="Fliege R."/>
            <person name="Jones-Kilpatrick D."/>
            <person name="Liu J."/>
            <person name="Barnell W.O."/>
            <person name="Egan S.E."/>
        </authorList>
    </citation>
    <scope>NUCLEOTIDE SEQUENCE [GENOMIC DNA]</scope>
    <scope>FUNCTION</scope>
    <scope>CATALYTIC ACTIVITY</scope>
    <scope>EXPRESSION</scope>
    <source>
        <strain>ATCC 31821 / ZM4 / CP4</strain>
    </source>
</reference>
<reference key="2">
    <citation type="journal article" date="2005" name="Nat. Biotechnol.">
        <title>The genome sequence of the ethanologenic bacterium Zymomonas mobilis ZM4.</title>
        <authorList>
            <person name="Seo J.-S."/>
            <person name="Chong H."/>
            <person name="Park H.S."/>
            <person name="Yoon K.-O."/>
            <person name="Jung C."/>
            <person name="Kim J.J."/>
            <person name="Hong J.H."/>
            <person name="Kim H."/>
            <person name="Kim J.-H."/>
            <person name="Kil J.-I."/>
            <person name="Park C.J."/>
            <person name="Oh H.-M."/>
            <person name="Lee J.-S."/>
            <person name="Jin S.-J."/>
            <person name="Um H.-W."/>
            <person name="Lee H.-J."/>
            <person name="Oh S.-J."/>
            <person name="Kim J.Y."/>
            <person name="Kang H.L."/>
            <person name="Lee S.Y."/>
            <person name="Lee K.J."/>
            <person name="Kang H.S."/>
        </authorList>
    </citation>
    <scope>NUCLEOTIDE SEQUENCE [LARGE SCALE GENOMIC DNA]</scope>
    <source>
        <strain>ATCC 31821 / ZM4 / CP4</strain>
    </source>
</reference>
<sequence>MRDIDSVMRLAPVMPVLVIEDIADAKPIAEALVAGGLNVLEVTLRTPCALEAIKIMKEVPGAVVGAGTVLNAKMLDQAQEAGCEFFVSPGLTADLGKHAVAQKAALLPGVANAADVMLGLDLGLDRFKFFPAENIGGLPALKSMASVFRQVRFCPTGGITPTSAPKYLENPSILCVGGSWVVPAGKPDVAKITALAKEASAFKRAAVA</sequence>
<proteinExistence type="evidence at protein level"/>